<dbReference type="EMBL" id="AF044258">
    <property type="protein sequence ID" value="AAC02534.1"/>
    <property type="molecule type" value="mRNA"/>
</dbReference>
<dbReference type="EMBL" id="AY748827">
    <property type="protein sequence ID" value="AAU94310.1"/>
    <property type="molecule type" value="mRNA"/>
</dbReference>
<dbReference type="EMBL" id="AF036297">
    <property type="protein sequence ID" value="AAC33315.2"/>
    <property type="molecule type" value="mRNA"/>
</dbReference>
<dbReference type="EMBL" id="AF085281">
    <property type="protein sequence ID" value="AAD22521.1"/>
    <property type="molecule type" value="mRNA"/>
</dbReference>
<dbReference type="EMBL" id="AF036290">
    <property type="protein sequence ID" value="AAC33308.1"/>
    <property type="molecule type" value="mRNA"/>
</dbReference>
<dbReference type="EMBL" id="AF036291">
    <property type="protein sequence ID" value="AAC33309.1"/>
    <property type="molecule type" value="mRNA"/>
</dbReference>
<dbReference type="EMBL" id="AF036292">
    <property type="protein sequence ID" value="AAC33310.1"/>
    <property type="molecule type" value="mRNA"/>
</dbReference>
<dbReference type="EMBL" id="AF036293">
    <property type="protein sequence ID" value="AAC33311.1"/>
    <property type="molecule type" value="mRNA"/>
</dbReference>
<dbReference type="EMBL" id="AF036294">
    <property type="protein sequence ID" value="AAC33312.1"/>
    <property type="molecule type" value="mRNA"/>
</dbReference>
<dbReference type="EMBL" id="AF036295">
    <property type="protein sequence ID" value="AAC33313.1"/>
    <property type="molecule type" value="mRNA"/>
</dbReference>
<dbReference type="EMBL" id="AF036296">
    <property type="protein sequence ID" value="AAC33314.1"/>
    <property type="molecule type" value="mRNA"/>
</dbReference>
<dbReference type="EMBL" id="AF326349">
    <property type="protein sequence ID" value="AAK97345.1"/>
    <property type="molecule type" value="mRNA"/>
</dbReference>
<dbReference type="EMBL" id="AF140284">
    <property type="protein sequence ID" value="AAD45668.1"/>
    <property type="molecule type" value="Genomic_DNA"/>
</dbReference>
<dbReference type="RefSeq" id="NP_788781.1">
    <property type="nucleotide sequence ID" value="NM_176608.1"/>
</dbReference>
<dbReference type="SMR" id="O46600"/>
<dbReference type="FunCoup" id="O46600">
    <property type="interactions" value="262"/>
</dbReference>
<dbReference type="STRING" id="9913.ENSBTAP00000065610"/>
<dbReference type="GlyCosmos" id="O46600">
    <property type="glycosylation" value="6 sites, No reported glycans"/>
</dbReference>
<dbReference type="GlyGen" id="O46600">
    <property type="glycosylation" value="6 sites"/>
</dbReference>
<dbReference type="PaxDb" id="9913-ENSBTAP00000001758"/>
<dbReference type="GeneID" id="280805"/>
<dbReference type="KEGG" id="bta:280805"/>
<dbReference type="CTD" id="2690"/>
<dbReference type="eggNOG" id="KOG3555">
    <property type="taxonomic scope" value="Eukaryota"/>
</dbReference>
<dbReference type="InParanoid" id="O46600"/>
<dbReference type="OrthoDB" id="9890215at2759"/>
<dbReference type="Proteomes" id="UP000009136">
    <property type="component" value="Unplaced"/>
</dbReference>
<dbReference type="GO" id="GO:0005829">
    <property type="term" value="C:cytosol"/>
    <property type="evidence" value="ECO:0000314"/>
    <property type="project" value="AgBase"/>
</dbReference>
<dbReference type="GO" id="GO:0009897">
    <property type="term" value="C:external side of plasma membrane"/>
    <property type="evidence" value="ECO:0000318"/>
    <property type="project" value="GO_Central"/>
</dbReference>
<dbReference type="GO" id="GO:0005576">
    <property type="term" value="C:extracellular region"/>
    <property type="evidence" value="ECO:0007669"/>
    <property type="project" value="UniProtKB-SubCell"/>
</dbReference>
<dbReference type="GO" id="GO:0070195">
    <property type="term" value="C:growth hormone receptor complex"/>
    <property type="evidence" value="ECO:0000318"/>
    <property type="project" value="GO_Central"/>
</dbReference>
<dbReference type="GO" id="GO:0016020">
    <property type="term" value="C:membrane"/>
    <property type="evidence" value="ECO:0000314"/>
    <property type="project" value="AgBase"/>
</dbReference>
<dbReference type="GO" id="GO:0019955">
    <property type="term" value="F:cytokine binding"/>
    <property type="evidence" value="ECO:0000318"/>
    <property type="project" value="GO_Central"/>
</dbReference>
<dbReference type="GO" id="GO:0004903">
    <property type="term" value="F:growth hormone receptor activity"/>
    <property type="evidence" value="ECO:0000318"/>
    <property type="project" value="GO_Central"/>
</dbReference>
<dbReference type="GO" id="GO:0017046">
    <property type="term" value="F:peptide hormone binding"/>
    <property type="evidence" value="ECO:0000318"/>
    <property type="project" value="GO_Central"/>
</dbReference>
<dbReference type="GO" id="GO:0019221">
    <property type="term" value="P:cytokine-mediated signaling pathway"/>
    <property type="evidence" value="ECO:0000318"/>
    <property type="project" value="GO_Central"/>
</dbReference>
<dbReference type="GO" id="GO:0006897">
    <property type="term" value="P:endocytosis"/>
    <property type="evidence" value="ECO:0007669"/>
    <property type="project" value="UniProtKB-KW"/>
</dbReference>
<dbReference type="GO" id="GO:0060396">
    <property type="term" value="P:growth hormone receptor signaling pathway"/>
    <property type="evidence" value="ECO:0000318"/>
    <property type="project" value="GO_Central"/>
</dbReference>
<dbReference type="GO" id="GO:0008284">
    <property type="term" value="P:positive regulation of cell population proliferation"/>
    <property type="evidence" value="ECO:0000318"/>
    <property type="project" value="GO_Central"/>
</dbReference>
<dbReference type="GO" id="GO:0046427">
    <property type="term" value="P:positive regulation of receptor signaling pathway via JAK-STAT"/>
    <property type="evidence" value="ECO:0000318"/>
    <property type="project" value="GO_Central"/>
</dbReference>
<dbReference type="CDD" id="cd00063">
    <property type="entry name" value="FN3"/>
    <property type="match status" value="1"/>
</dbReference>
<dbReference type="FunFam" id="2.60.40.10:FF:000269">
    <property type="entry name" value="Growth hormone receptor"/>
    <property type="match status" value="1"/>
</dbReference>
<dbReference type="FunFam" id="2.60.40.10:FF:000318">
    <property type="entry name" value="Growth hormone receptor"/>
    <property type="match status" value="1"/>
</dbReference>
<dbReference type="Gene3D" id="2.60.40.10">
    <property type="entry name" value="Immunoglobulins"/>
    <property type="match status" value="2"/>
</dbReference>
<dbReference type="InterPro" id="IPR003961">
    <property type="entry name" value="FN3_dom"/>
</dbReference>
<dbReference type="InterPro" id="IPR036116">
    <property type="entry name" value="FN3_sf"/>
</dbReference>
<dbReference type="InterPro" id="IPR025871">
    <property type="entry name" value="GHBP"/>
</dbReference>
<dbReference type="InterPro" id="IPR015152">
    <property type="entry name" value="Growth/epo_recpt_lig-bind"/>
</dbReference>
<dbReference type="InterPro" id="IPR013783">
    <property type="entry name" value="Ig-like_fold"/>
</dbReference>
<dbReference type="InterPro" id="IPR003528">
    <property type="entry name" value="Long_hematopoietin_rcpt_CS"/>
</dbReference>
<dbReference type="PANTHER" id="PTHR23037">
    <property type="entry name" value="CYTOKINE RECEPTOR"/>
    <property type="match status" value="1"/>
</dbReference>
<dbReference type="PANTHER" id="PTHR23037:SF46">
    <property type="entry name" value="INTERLEUKIN 5 RECEPTOR SUBUNIT ALPHA"/>
    <property type="match status" value="1"/>
</dbReference>
<dbReference type="Pfam" id="PF09067">
    <property type="entry name" value="EpoR_lig-bind"/>
    <property type="match status" value="1"/>
</dbReference>
<dbReference type="Pfam" id="PF12772">
    <property type="entry name" value="GHBP"/>
    <property type="match status" value="1"/>
</dbReference>
<dbReference type="SUPFAM" id="SSF49265">
    <property type="entry name" value="Fibronectin type III"/>
    <property type="match status" value="2"/>
</dbReference>
<dbReference type="PROSITE" id="PS50853">
    <property type="entry name" value="FN3"/>
    <property type="match status" value="1"/>
</dbReference>
<dbReference type="PROSITE" id="PS01352">
    <property type="entry name" value="HEMATOPO_REC_L_F1"/>
    <property type="match status" value="1"/>
</dbReference>
<gene>
    <name type="primary">GHR</name>
</gene>
<feature type="signal peptide" evidence="4">
    <location>
        <begin position="1"/>
        <end position="18"/>
    </location>
</feature>
<feature type="chain" id="PRO_0000010951" description="Growth hormone receptor">
    <location>
        <begin position="19"/>
        <end position="634"/>
    </location>
</feature>
<feature type="chain" id="PRO_0000010952" description="Growth hormone-binding protein" evidence="3">
    <location>
        <begin position="19"/>
        <end position="252"/>
    </location>
</feature>
<feature type="topological domain" description="Extracellular" evidence="4">
    <location>
        <begin position="19"/>
        <end position="260"/>
    </location>
</feature>
<feature type="transmembrane region" description="Helical" evidence="4">
    <location>
        <begin position="261"/>
        <end position="284"/>
    </location>
</feature>
<feature type="topological domain" description="Cytoplasmic" evidence="4">
    <location>
        <begin position="285"/>
        <end position="634"/>
    </location>
</feature>
<feature type="domain" description="Fibronectin type-III" evidence="5">
    <location>
        <begin position="147"/>
        <end position="250"/>
    </location>
</feature>
<feature type="region of interest" description="Required for JAK2 binding" evidence="2">
    <location>
        <begin position="290"/>
        <end position="375"/>
    </location>
</feature>
<feature type="short sequence motif" description="WSXWS motif" evidence="1">
    <location>
        <begin position="236"/>
        <end position="240"/>
    </location>
</feature>
<feature type="short sequence motif" description="Box 1 motif" evidence="2">
    <location>
        <begin position="293"/>
        <end position="301"/>
    </location>
</feature>
<feature type="short sequence motif" description="UbE motif" evidence="3">
    <location>
        <begin position="336"/>
        <end position="345"/>
    </location>
</feature>
<feature type="modified residue" description="Phosphoserine" evidence="1">
    <location>
        <position position="337"/>
    </location>
</feature>
<feature type="glycosylation site" description="N-linked (GlcNAc...) asparagine" evidence="4">
    <location>
        <position position="46"/>
    </location>
</feature>
<feature type="glycosylation site" description="N-linked (GlcNAc...) asparagine" evidence="4">
    <location>
        <position position="73"/>
    </location>
</feature>
<feature type="glycosylation site" description="N-linked (GlcNAc...) asparagine" evidence="4">
    <location>
        <position position="111"/>
    </location>
</feature>
<feature type="glycosylation site" description="N-linked (GlcNAc...) asparagine" evidence="4">
    <location>
        <position position="152"/>
    </location>
</feature>
<feature type="glycosylation site" description="N-linked (GlcNAc...) asparagine" evidence="4">
    <location>
        <position position="157"/>
    </location>
</feature>
<feature type="glycosylation site" description="N-linked (GlcNAc...) asparagine" evidence="4">
    <location>
        <position position="196"/>
    </location>
</feature>
<feature type="disulfide bond" evidence="1">
    <location>
        <begin position="56"/>
        <end position="66"/>
    </location>
</feature>
<feature type="disulfide bond" evidence="1">
    <location>
        <begin position="97"/>
        <end position="108"/>
    </location>
</feature>
<feature type="disulfide bond" evidence="1">
    <location>
        <begin position="122"/>
        <end position="136"/>
    </location>
</feature>
<feature type="sequence variant" evidence="6">
    <original>P</original>
    <variation>S</variation>
    <location>
        <position position="519"/>
    </location>
</feature>
<feature type="sequence conflict" description="In Ref. 1; no nucleotide entry." evidence="8" ref="1">
    <original>G</original>
    <variation>V</variation>
    <location>
        <position position="71"/>
    </location>
</feature>
<feature type="sequence conflict" description="In Ref. 3; AAU94310." evidence="8" ref="3">
    <original>Y</original>
    <variation>F</variation>
    <location>
        <position position="279"/>
    </location>
</feature>
<feature type="sequence conflict" description="In Ref. 3; AAU94310." evidence="8" ref="3">
    <original>N</original>
    <variation>T</variation>
    <location>
        <position position="528"/>
    </location>
</feature>
<feature type="sequence conflict" description="In Ref. 2; AAC02534 and 3; AAU94310." evidence="8" ref="2 3">
    <original>V</original>
    <variation>I</variation>
    <location>
        <position position="552"/>
    </location>
</feature>
<feature type="sequence conflict" description="In Ref. 1; no nucleotide entry." evidence="8" ref="1">
    <original>S</original>
    <variation>G</variation>
    <location>
        <position position="555"/>
    </location>
</feature>
<feature type="sequence conflict" description="In Ref. 5; AAD45668." evidence="8" ref="5">
    <original>S</original>
    <variation>F</variation>
    <location>
        <position position="593"/>
    </location>
</feature>
<feature type="sequence conflict" description="In Ref. 5; AAD45668." evidence="8" ref="5">
    <original>P</original>
    <variation>S</variation>
    <location>
        <position position="600"/>
    </location>
</feature>
<proteinExistence type="evidence at transcript level"/>
<name>GHR_BOVIN</name>
<accession>O46600</accession>
<accession>O77538</accession>
<accession>Q5XM78</accession>
<accession>Q9TQV9</accession>
<accession>Q9TUY7</accession>
<protein>
    <recommendedName>
        <fullName evidence="7">Growth hormone receptor</fullName>
        <shortName>GH receptor</shortName>
    </recommendedName>
    <alternativeName>
        <fullName>Somatotropin receptor</fullName>
    </alternativeName>
    <component>
        <recommendedName>
            <fullName>Growth hormone-binding protein</fullName>
            <shortName>GH-binding protein</shortName>
            <shortName>GHBP</shortName>
        </recommendedName>
        <alternativeName>
            <fullName>Serum-binding protein</fullName>
        </alternativeName>
    </component>
</protein>
<sequence length="634" mass="70901">MDLWQLLLTLAVAGSSDAFSGSEATPAFLVRASQSLQILYPVLETNSSGNPKFTKCRSPELETFSCHWTDGANHSLQSPGSVQMFYIRRDIQEWKECPDYVSAGENSCYFNSSYTSVWTPYCIKLTSNGGIVDHKCFSVEDIVQPDPPVGLNWTLLNISLTEIHADILVKWEPPPNTDVKMGWIILEYELHYKELNETQWKMMDPLMVTSVPMYSLRLDKEYEVRVRTRQRNTEKYGKFSEVLLITFPQMNPSACEEDFQFPWFLIIIFGILGLAVTLYLLIFSKQQRIKMLILPPVPVPKIKGIDPDLLKEGKLEEVNTILAIHDNYKHEFYNDDSWVEFIELDIDDPDEKTEGSDTDRLLSNDHEKSLNIFGAKDDDSGRTSCYEPDILEADFHVSDMCDGTSEVAQPQRLKGEADISCLDQKNQNNSPSNDAAPASQQPSVILVEENKPRPLLIGGTESTHQAVHTQLSNPSSLANIDFYAQVSDITPAGNVVLSPGQKNKTGNPQCDTHPEVVTPCQANFIVDNAYFCEVDAKKYIALAPHVEAESHVEPSFNQEDIYITTESLTTTAGRSGTAEHVPSSEIPVPDYTSIHIVQSPQGLVLNATALPLPDKEFLSSCGYVSTDQLNKIMP</sequence>
<comment type="function">
    <text evidence="1">Receptor for pituitary gland growth hormone (GH1) involved in regulating postnatal body growth. On ligand binding, couples to the JAK2/STAT5 pathway.</text>
</comment>
<comment type="function">
    <molecule>Growth hormone-binding protein</molecule>
    <text evidence="1">The soluble form (GHBP) acts as a reservoir of growth hormone in plasma and may be a modulator/inhibitor of GH signaling.</text>
</comment>
<comment type="subunit">
    <text evidence="1">On growth hormone (GH) binding, forms homodimers and binds JAK2 via a box 1-containing domain.</text>
</comment>
<comment type="subcellular location">
    <subcellularLocation>
        <location evidence="1">Cell membrane</location>
        <topology evidence="4">Single-pass type I membrane protein</topology>
    </subcellularLocation>
    <text evidence="3">On growth hormone binding, GHR is ubiquitinated, internalized, down-regulated and transported into a degradative or non-degradative pathway.</text>
</comment>
<comment type="subcellular location">
    <molecule>Growth hormone-binding protein</molecule>
    <subcellularLocation>
        <location evidence="1">Secreted</location>
    </subcellularLocation>
    <text evidence="1">Complexed to a substantial fraction of circulating GH.</text>
</comment>
<comment type="domain">
    <text evidence="1">The WSXWS motif appears to be necessary for proper protein folding and thereby efficient intracellular transport and cell-surface receptor binding.</text>
</comment>
<comment type="domain">
    <text evidence="2">The box 1 motif is required for JAK interaction and/or activation.</text>
</comment>
<comment type="domain">
    <text evidence="1">The extracellular domain is the ligand-binding domain representing the growth hormone-binding protein (GHBP).</text>
</comment>
<comment type="domain">
    <text evidence="3">The ubiquitination-dependent endocytosis motif (UbE) is required for recruitment of the ubiquitin conjugation system on to the receptor and for its internalization.</text>
</comment>
<comment type="PTM">
    <text evidence="1 3">The soluble form (GHBP) is produced by phorbol ester-promoted proteolytic cleavage at the cell surface (shedding) by ADAM17/TACE (By similarity). Shedding is inhibited by growth hormone (GH) binding to the receptor probably due to a conformational change in GHR rendering the receptor inaccessible to ADAM17 (By similarity).</text>
</comment>
<comment type="PTM">
    <text evidence="1">On GH binding, phosphorylated on tyrosine residues in the cytoplasmic domain by JAK2.</text>
</comment>
<comment type="PTM">
    <text evidence="1 3">Ubiquitinated by the ECS(SOCS2) complex following ligand-binding and phosphorylation by JAK2, leading to its degradation by the proteasome. Regulation by the ECS(SOCS2) complex acts as a negative feedback loop of growth hormone receptor signaling (By similarity). Ubiquitination is not sufficient for GHR internalization (By similarity).</text>
</comment>
<comment type="similarity">
    <text evidence="8">Belongs to the type I cytokine receptor family. Type 1 subfamily.</text>
</comment>
<organism>
    <name type="scientific">Bos taurus</name>
    <name type="common">Bovine</name>
    <dbReference type="NCBI Taxonomy" id="9913"/>
    <lineage>
        <taxon>Eukaryota</taxon>
        <taxon>Metazoa</taxon>
        <taxon>Chordata</taxon>
        <taxon>Craniata</taxon>
        <taxon>Vertebrata</taxon>
        <taxon>Euteleostomi</taxon>
        <taxon>Mammalia</taxon>
        <taxon>Eutheria</taxon>
        <taxon>Laurasiatheria</taxon>
        <taxon>Artiodactyla</taxon>
        <taxon>Ruminantia</taxon>
        <taxon>Pecora</taxon>
        <taxon>Bovidae</taxon>
        <taxon>Bovinae</taxon>
        <taxon>Bos</taxon>
    </lineage>
</organism>
<evidence type="ECO:0000250" key="1">
    <source>
        <dbReference type="UniProtKB" id="P10912"/>
    </source>
</evidence>
<evidence type="ECO:0000250" key="2">
    <source>
        <dbReference type="UniProtKB" id="P16310"/>
    </source>
</evidence>
<evidence type="ECO:0000250" key="3">
    <source>
        <dbReference type="UniProtKB" id="P19941"/>
    </source>
</evidence>
<evidence type="ECO:0000255" key="4"/>
<evidence type="ECO:0000255" key="5">
    <source>
        <dbReference type="PROSITE-ProRule" id="PRU00316"/>
    </source>
</evidence>
<evidence type="ECO:0000269" key="6">
    <source>
    </source>
</evidence>
<evidence type="ECO:0000303" key="7">
    <source>
    </source>
</evidence>
<evidence type="ECO:0000305" key="8"/>
<keyword id="KW-1003">Cell membrane</keyword>
<keyword id="KW-1015">Disulfide bond</keyword>
<keyword id="KW-0254">Endocytosis</keyword>
<keyword id="KW-0325">Glycoprotein</keyword>
<keyword id="KW-0472">Membrane</keyword>
<keyword id="KW-0597">Phosphoprotein</keyword>
<keyword id="KW-0675">Receptor</keyword>
<keyword id="KW-1185">Reference proteome</keyword>
<keyword id="KW-0964">Secreted</keyword>
<keyword id="KW-0732">Signal</keyword>
<keyword id="KW-0812">Transmembrane</keyword>
<keyword id="KW-1133">Transmembrane helix</keyword>
<keyword id="KW-0832">Ubl conjugation</keyword>
<reference key="1">
    <citation type="journal article" date="1990" name="Mol. Cell. Endocrinol.">
        <title>Cloning and in vivo expression of bovine growth hormone receptor mRNA.</title>
        <authorList>
            <person name="Hauser S.D."/>
            <person name="McGrath M.F."/>
            <person name="Collier R.J."/>
            <person name="Krivi G.G."/>
        </authorList>
    </citation>
    <scope>NUCLEOTIDE SEQUENCE [MRNA]</scope>
    <source>
        <strain>Holstein</strain>
        <tissue>Liver</tissue>
    </source>
</reference>
<reference key="2">
    <citation type="journal article" date="1998" name="J. Dairy Sci.">
        <title>Expression of somatotropin receptor messenger ribonucleic acid in bovine tissues.</title>
        <authorList>
            <person name="Lucy M.C."/>
            <person name="Boyd C.K."/>
            <person name="Koenigsfeld A.T."/>
            <person name="Okamura C.S."/>
        </authorList>
    </citation>
    <scope>NUCLEOTIDE SEQUENCE [MRNA]</scope>
    <source>
        <strain>Holstein</strain>
        <tissue>Liver</tissue>
    </source>
</reference>
<reference key="3">
    <citation type="submission" date="2004-09" db="EMBL/GenBank/DDBJ databases">
        <title>Functional expression of bovine growth hormone receptor.</title>
        <authorList>
            <person name="Zhou Y."/>
            <person name="Jiang H."/>
        </authorList>
    </citation>
    <scope>NUCLEOTIDE SEQUENCE [MRNA]</scope>
</reference>
<reference key="4">
    <citation type="journal article" date="2001" name="Gene">
        <title>Variants of the 5'-untranslated region of the bovine growth hormone receptor mRNA: isolation, expression and effects on translational efficiency.</title>
        <authorList>
            <person name="Jiang H."/>
            <person name="Lucy M.C."/>
        </authorList>
    </citation>
    <scope>NUCLEOTIDE SEQUENCE [MRNA] OF 1-14</scope>
</reference>
<reference key="5">
    <citation type="journal article" date="1999" name="Anim. Genet.">
        <title>Polymorphism in exon 10 of the bovine GHR gene detected by PCR-DGGE.</title>
        <authorList>
            <person name="Ge W."/>
            <person name="Davis M.E."/>
            <person name="Hines H.C."/>
            <person name="Irvin K.M."/>
        </authorList>
    </citation>
    <scope>NUCLEOTIDE SEQUENCE [GENOMIC DNA] OF 470-634</scope>
    <scope>VARIANT SER-519</scope>
</reference>